<proteinExistence type="inferred from homology"/>
<dbReference type="EC" id="3.-.-.-"/>
<dbReference type="EMBL" id="CP000127">
    <property type="protein sequence ID" value="ABA59171.1"/>
    <property type="molecule type" value="Genomic_DNA"/>
</dbReference>
<dbReference type="RefSeq" id="WP_002813182.1">
    <property type="nucleotide sequence ID" value="NC_007484.1"/>
</dbReference>
<dbReference type="SMR" id="Q3J7M5"/>
<dbReference type="STRING" id="323261.Noc_2718"/>
<dbReference type="KEGG" id="noc:Noc_2718"/>
<dbReference type="eggNOG" id="COG0561">
    <property type="taxonomic scope" value="Bacteria"/>
</dbReference>
<dbReference type="eggNOG" id="COG3100">
    <property type="taxonomic scope" value="Bacteria"/>
</dbReference>
<dbReference type="HOGENOM" id="CLU_030534_2_0_6"/>
<dbReference type="InParanoid" id="Q3J7M5"/>
<dbReference type="Proteomes" id="UP000006838">
    <property type="component" value="Chromosome"/>
</dbReference>
<dbReference type="GO" id="GO:0000287">
    <property type="term" value="F:magnesium ion binding"/>
    <property type="evidence" value="ECO:0007669"/>
    <property type="project" value="UniProtKB-ARBA"/>
</dbReference>
<dbReference type="GO" id="GO:0016791">
    <property type="term" value="F:phosphatase activity"/>
    <property type="evidence" value="ECO:0007669"/>
    <property type="project" value="UniProtKB-ARBA"/>
</dbReference>
<dbReference type="CDD" id="cd02605">
    <property type="entry name" value="HAD_SPP"/>
    <property type="match status" value="1"/>
</dbReference>
<dbReference type="Gene3D" id="3.90.1070.10">
    <property type="match status" value="1"/>
</dbReference>
<dbReference type="Gene3D" id="3.40.50.1000">
    <property type="entry name" value="HAD superfamily/HAD-like"/>
    <property type="match status" value="1"/>
</dbReference>
<dbReference type="Gene3D" id="3.10.510.20">
    <property type="entry name" value="YcgL domain"/>
    <property type="match status" value="1"/>
</dbReference>
<dbReference type="HAMAP" id="MF_01866">
    <property type="entry name" value="UPF0745"/>
    <property type="match status" value="1"/>
</dbReference>
<dbReference type="InterPro" id="IPR036412">
    <property type="entry name" value="HAD-like_sf"/>
</dbReference>
<dbReference type="InterPro" id="IPR006379">
    <property type="entry name" value="HAD-SF_hydro_IIB"/>
</dbReference>
<dbReference type="InterPro" id="IPR023214">
    <property type="entry name" value="HAD_sf"/>
</dbReference>
<dbReference type="InterPro" id="IPR006380">
    <property type="entry name" value="SPP-like_dom"/>
</dbReference>
<dbReference type="InterPro" id="IPR051518">
    <property type="entry name" value="Sucrose_Phosphatase"/>
</dbReference>
<dbReference type="InterPro" id="IPR038068">
    <property type="entry name" value="YcgL-like_sf"/>
</dbReference>
<dbReference type="InterPro" id="IPR027354">
    <property type="entry name" value="YcgL_dom"/>
</dbReference>
<dbReference type="NCBIfam" id="TIGR01484">
    <property type="entry name" value="HAD-SF-IIB"/>
    <property type="match status" value="1"/>
</dbReference>
<dbReference type="PANTHER" id="PTHR46521">
    <property type="entry name" value="SUCROSE-PHOSPHATASE 2-RELATED"/>
    <property type="match status" value="1"/>
</dbReference>
<dbReference type="PANTHER" id="PTHR46521:SF4">
    <property type="entry name" value="SUCROSE-PHOSPHATASE 2-RELATED"/>
    <property type="match status" value="1"/>
</dbReference>
<dbReference type="Pfam" id="PF05116">
    <property type="entry name" value="S6PP"/>
    <property type="match status" value="1"/>
</dbReference>
<dbReference type="Pfam" id="PF05166">
    <property type="entry name" value="YcgL"/>
    <property type="match status" value="1"/>
</dbReference>
<dbReference type="SFLD" id="SFLDG01141">
    <property type="entry name" value="C2.B.1:_Sucrose_Phosphatase_Li"/>
    <property type="match status" value="1"/>
</dbReference>
<dbReference type="SFLD" id="SFLDG01140">
    <property type="entry name" value="C2.B:_Phosphomannomutase_and_P"/>
    <property type="match status" value="1"/>
</dbReference>
<dbReference type="SUPFAM" id="SSF56784">
    <property type="entry name" value="HAD-like"/>
    <property type="match status" value="1"/>
</dbReference>
<dbReference type="SUPFAM" id="SSF160191">
    <property type="entry name" value="YcgL-like"/>
    <property type="match status" value="1"/>
</dbReference>
<dbReference type="PROSITE" id="PS51648">
    <property type="entry name" value="YCGL"/>
    <property type="match status" value="1"/>
</dbReference>
<reference key="1">
    <citation type="journal article" date="2006" name="Appl. Environ. Microbiol.">
        <title>Complete genome sequence of the marine, chemolithoautotrophic, ammonia-oxidizing bacterium Nitrosococcus oceani ATCC 19707.</title>
        <authorList>
            <person name="Klotz M.G."/>
            <person name="Arp D.J."/>
            <person name="Chain P.S.G."/>
            <person name="El-Sheikh A.F."/>
            <person name="Hauser L.J."/>
            <person name="Hommes N.G."/>
            <person name="Larimer F.W."/>
            <person name="Malfatti S.A."/>
            <person name="Norton J.M."/>
            <person name="Poret-Peterson A.T."/>
            <person name="Vergez L.M."/>
            <person name="Ward B.B."/>
        </authorList>
    </citation>
    <scope>NUCLEOTIDE SEQUENCE [LARGE SCALE GENOMIC DNA]</scope>
    <source>
        <strain>ATCC 19707 / BCRC 17464 / JCM 30415 / NCIMB 11848 / C-107</strain>
    </source>
</reference>
<comment type="similarity">
    <text evidence="1">In the N-terminal section; belongs to the HAD-like hydrolase superfamily.</text>
</comment>
<keyword id="KW-0378">Hydrolase</keyword>
<keyword id="KW-1185">Reference proteome</keyword>
<accession>Q3J7M5</accession>
<feature type="chain" id="PRO_0000375420" description="Putative HAD-like hydrolase Noc_2718">
    <location>
        <begin position="1"/>
        <end position="371"/>
    </location>
</feature>
<feature type="domain" description="YcgL">
    <location>
        <begin position="291"/>
        <end position="371"/>
    </location>
</feature>
<feature type="region of interest" description="HAD-like hydrolase">
    <location>
        <begin position="1"/>
        <end position="288"/>
    </location>
</feature>
<sequence length="371" mass="42678">MKQKILLCSDLDRTLLPNGHQAESPQARLRLQRLAQRPGIILAYVSGRHKALIQSAIREYDLPLPDFAIGDVGTTIYQITDNQWHPWEDWSKEISQDWQGINQAGLAKLFADITPLRLQEPEKQNRYKLSYYAPPELDWENLIPQLAQRLQAQGIQASFIWSVDETAQIGLLDILPKRANKLHAIRFLMERQHFDKSHTVFAGDSGNDLEVLASGLQAILVRNAQEEVRQEALRRLPPEHSQQLYLARGGFMGLNGYYSAGVLEGLAHFFPETRAWMETGREESAEEETAQSCAIYRSCKRNDSYLYVESQDDFSRVPGKLLEMLGKLEFVMRLELRPEISLAQANTREVMQMLREKGYFLQLSSREYRRS</sequence>
<protein>
    <recommendedName>
        <fullName>Putative HAD-like hydrolase Noc_2718</fullName>
        <ecNumber>3.-.-.-</ecNumber>
    </recommendedName>
</protein>
<name>Y2718_NITOC</name>
<organism>
    <name type="scientific">Nitrosococcus oceani (strain ATCC 19707 / BCRC 17464 / JCM 30415 / NCIMB 11848 / C-107)</name>
    <dbReference type="NCBI Taxonomy" id="323261"/>
    <lineage>
        <taxon>Bacteria</taxon>
        <taxon>Pseudomonadati</taxon>
        <taxon>Pseudomonadota</taxon>
        <taxon>Gammaproteobacteria</taxon>
        <taxon>Chromatiales</taxon>
        <taxon>Chromatiaceae</taxon>
        <taxon>Nitrosococcus</taxon>
    </lineage>
</organism>
<evidence type="ECO:0000305" key="1"/>
<gene>
    <name type="ordered locus">Noc_2718</name>
</gene>